<accession>A0Q106</accession>
<name>RL28_CLONN</name>
<keyword id="KW-1185">Reference proteome</keyword>
<keyword id="KW-0687">Ribonucleoprotein</keyword>
<keyword id="KW-0689">Ribosomal protein</keyword>
<organism>
    <name type="scientific">Clostridium novyi (strain NT)</name>
    <dbReference type="NCBI Taxonomy" id="386415"/>
    <lineage>
        <taxon>Bacteria</taxon>
        <taxon>Bacillati</taxon>
        <taxon>Bacillota</taxon>
        <taxon>Clostridia</taxon>
        <taxon>Eubacteriales</taxon>
        <taxon>Clostridiaceae</taxon>
        <taxon>Clostridium</taxon>
    </lineage>
</organism>
<reference key="1">
    <citation type="journal article" date="2006" name="Nat. Biotechnol.">
        <title>The genome and transcriptomes of the anti-tumor agent Clostridium novyi-NT.</title>
        <authorList>
            <person name="Bettegowda C."/>
            <person name="Huang X."/>
            <person name="Lin J."/>
            <person name="Cheong I."/>
            <person name="Kohli M."/>
            <person name="Szabo S.A."/>
            <person name="Zhang X."/>
            <person name="Diaz L.A. Jr."/>
            <person name="Velculescu V.E."/>
            <person name="Parmigiani G."/>
            <person name="Kinzler K.W."/>
            <person name="Vogelstein B."/>
            <person name="Zhou S."/>
        </authorList>
    </citation>
    <scope>NUCLEOTIDE SEQUENCE [LARGE SCALE GENOMIC DNA]</scope>
    <source>
        <strain>NT</strain>
    </source>
</reference>
<protein>
    <recommendedName>
        <fullName evidence="1">Large ribosomal subunit protein bL28</fullName>
    </recommendedName>
    <alternativeName>
        <fullName evidence="2">50S ribosomal protein L28</fullName>
    </alternativeName>
</protein>
<comment type="similarity">
    <text evidence="1">Belongs to the bacterial ribosomal protein bL28 family.</text>
</comment>
<proteinExistence type="inferred from homology"/>
<feature type="chain" id="PRO_1000007215" description="Large ribosomal subunit protein bL28">
    <location>
        <begin position="1"/>
        <end position="63"/>
    </location>
</feature>
<gene>
    <name evidence="1" type="primary">rpmB</name>
    <name type="ordered locus">NT01CX_2235</name>
</gene>
<evidence type="ECO:0000255" key="1">
    <source>
        <dbReference type="HAMAP-Rule" id="MF_00373"/>
    </source>
</evidence>
<evidence type="ECO:0000305" key="2"/>
<dbReference type="EMBL" id="CP000382">
    <property type="protein sequence ID" value="ABK61405.1"/>
    <property type="molecule type" value="Genomic_DNA"/>
</dbReference>
<dbReference type="RefSeq" id="WP_011722305.1">
    <property type="nucleotide sequence ID" value="NC_008593.1"/>
</dbReference>
<dbReference type="SMR" id="A0Q106"/>
<dbReference type="STRING" id="386415.NT01CX_2235"/>
<dbReference type="KEGG" id="cno:NT01CX_2235"/>
<dbReference type="eggNOG" id="COG0227">
    <property type="taxonomic scope" value="Bacteria"/>
</dbReference>
<dbReference type="HOGENOM" id="CLU_064548_7_0_9"/>
<dbReference type="Proteomes" id="UP000008220">
    <property type="component" value="Chromosome"/>
</dbReference>
<dbReference type="GO" id="GO:1990904">
    <property type="term" value="C:ribonucleoprotein complex"/>
    <property type="evidence" value="ECO:0007669"/>
    <property type="project" value="UniProtKB-KW"/>
</dbReference>
<dbReference type="GO" id="GO:0005840">
    <property type="term" value="C:ribosome"/>
    <property type="evidence" value="ECO:0007669"/>
    <property type="project" value="UniProtKB-KW"/>
</dbReference>
<dbReference type="GO" id="GO:0003735">
    <property type="term" value="F:structural constituent of ribosome"/>
    <property type="evidence" value="ECO:0007669"/>
    <property type="project" value="InterPro"/>
</dbReference>
<dbReference type="GO" id="GO:0006412">
    <property type="term" value="P:translation"/>
    <property type="evidence" value="ECO:0007669"/>
    <property type="project" value="UniProtKB-UniRule"/>
</dbReference>
<dbReference type="Gene3D" id="2.30.170.40">
    <property type="entry name" value="Ribosomal protein L28/L24"/>
    <property type="match status" value="1"/>
</dbReference>
<dbReference type="HAMAP" id="MF_00373">
    <property type="entry name" value="Ribosomal_bL28"/>
    <property type="match status" value="1"/>
</dbReference>
<dbReference type="InterPro" id="IPR050096">
    <property type="entry name" value="Bacterial_rp_bL28"/>
</dbReference>
<dbReference type="InterPro" id="IPR026569">
    <property type="entry name" value="Ribosomal_bL28"/>
</dbReference>
<dbReference type="InterPro" id="IPR034704">
    <property type="entry name" value="Ribosomal_bL28/bL31-like_sf"/>
</dbReference>
<dbReference type="InterPro" id="IPR001383">
    <property type="entry name" value="Ribosomal_bL28_bact-type"/>
</dbReference>
<dbReference type="InterPro" id="IPR037147">
    <property type="entry name" value="Ribosomal_bL28_sf"/>
</dbReference>
<dbReference type="NCBIfam" id="TIGR00009">
    <property type="entry name" value="L28"/>
    <property type="match status" value="1"/>
</dbReference>
<dbReference type="PANTHER" id="PTHR39080">
    <property type="entry name" value="50S RIBOSOMAL PROTEIN L28"/>
    <property type="match status" value="1"/>
</dbReference>
<dbReference type="PANTHER" id="PTHR39080:SF1">
    <property type="entry name" value="LARGE RIBOSOMAL SUBUNIT PROTEIN BL28A"/>
    <property type="match status" value="1"/>
</dbReference>
<dbReference type="Pfam" id="PF00830">
    <property type="entry name" value="Ribosomal_L28"/>
    <property type="match status" value="1"/>
</dbReference>
<dbReference type="SUPFAM" id="SSF143800">
    <property type="entry name" value="L28p-like"/>
    <property type="match status" value="1"/>
</dbReference>
<sequence length="63" mass="6978">MAKRCEVCGKGVVSGVQYSHSHRQSKRRWAPNIKSVRAVVNGVPKKVSVCTRCLRSGKVQRAI</sequence>